<accession>A8H249</accession>
<gene>
    <name evidence="1" type="primary">der</name>
    <name type="synonym">engA</name>
    <name type="ordered locus">Spea_1309</name>
</gene>
<organism>
    <name type="scientific">Shewanella pealeana (strain ATCC 700345 / ANG-SQ1)</name>
    <dbReference type="NCBI Taxonomy" id="398579"/>
    <lineage>
        <taxon>Bacteria</taxon>
        <taxon>Pseudomonadati</taxon>
        <taxon>Pseudomonadota</taxon>
        <taxon>Gammaproteobacteria</taxon>
        <taxon>Alteromonadales</taxon>
        <taxon>Shewanellaceae</taxon>
        <taxon>Shewanella</taxon>
    </lineage>
</organism>
<evidence type="ECO:0000255" key="1">
    <source>
        <dbReference type="HAMAP-Rule" id="MF_00195"/>
    </source>
</evidence>
<evidence type="ECO:0000256" key="2">
    <source>
        <dbReference type="SAM" id="MobiDB-lite"/>
    </source>
</evidence>
<comment type="function">
    <text evidence="1">GTPase that plays an essential role in the late steps of ribosome biogenesis.</text>
</comment>
<comment type="subunit">
    <text evidence="1">Associates with the 50S ribosomal subunit.</text>
</comment>
<comment type="similarity">
    <text evidence="1">Belongs to the TRAFAC class TrmE-Era-EngA-EngB-Septin-like GTPase superfamily. EngA (Der) GTPase family.</text>
</comment>
<name>DER_SHEPA</name>
<keyword id="KW-0342">GTP-binding</keyword>
<keyword id="KW-0547">Nucleotide-binding</keyword>
<keyword id="KW-1185">Reference proteome</keyword>
<keyword id="KW-0677">Repeat</keyword>
<keyword id="KW-0690">Ribosome biogenesis</keyword>
<sequence>MIPVVALVGRPNVGKSTLFNRLTRTRDALVADFPGLTRDRKYGRAHLAGYEFIVVDTGGIDGTEEGIETRMAEQSLAAIEEADVVLFLTDARAGLTAADLAIAQHLRSREKTTFVVANKVDGIDADSACAEFWSLGLGEVYQMAAAQGRGVTNMIEYSLAPYAEAMGIVKQEDGDDDEEEREYTEEQAEAEQKRLQDLPIKLAIIGKPNVGKSTLTNRILGEERVVVYDEPGTTRDSIYIPMERQGREYVLIDTAGVRRRSKVHETVEKFSVIKTLKAVEDSNVVLLVIDAREGIAEQDLGLLGFVLNAGRALVIAINKWDGIDQNIKDRVKTELDRRLGFIDFARIHFISALHGTGVGHLFESIEEAYDSATRRVSTSMLTRIMQMSQDDHQPPLVNGRRVKLKYAHAGGYNPPIVVVHGNQVKKLPDSYKRYMMNYFRRSLKVIGTPIQLRFQEGGNPFEGMNSKKLTVSQERRRKRMVGHIRDKNKD</sequence>
<feature type="chain" id="PRO_1000077674" description="GTPase Der">
    <location>
        <begin position="1"/>
        <end position="490"/>
    </location>
</feature>
<feature type="domain" description="EngA-type G 1">
    <location>
        <begin position="3"/>
        <end position="166"/>
    </location>
</feature>
<feature type="domain" description="EngA-type G 2">
    <location>
        <begin position="200"/>
        <end position="373"/>
    </location>
</feature>
<feature type="domain" description="KH-like" evidence="1">
    <location>
        <begin position="374"/>
        <end position="458"/>
    </location>
</feature>
<feature type="region of interest" description="Disordered" evidence="2">
    <location>
        <begin position="470"/>
        <end position="490"/>
    </location>
</feature>
<feature type="binding site" evidence="1">
    <location>
        <begin position="9"/>
        <end position="16"/>
    </location>
    <ligand>
        <name>GTP</name>
        <dbReference type="ChEBI" id="CHEBI:37565"/>
        <label>1</label>
    </ligand>
</feature>
<feature type="binding site" evidence="1">
    <location>
        <begin position="56"/>
        <end position="60"/>
    </location>
    <ligand>
        <name>GTP</name>
        <dbReference type="ChEBI" id="CHEBI:37565"/>
        <label>1</label>
    </ligand>
</feature>
<feature type="binding site" evidence="1">
    <location>
        <begin position="118"/>
        <end position="121"/>
    </location>
    <ligand>
        <name>GTP</name>
        <dbReference type="ChEBI" id="CHEBI:37565"/>
        <label>1</label>
    </ligand>
</feature>
<feature type="binding site" evidence="1">
    <location>
        <begin position="206"/>
        <end position="213"/>
    </location>
    <ligand>
        <name>GTP</name>
        <dbReference type="ChEBI" id="CHEBI:37565"/>
        <label>2</label>
    </ligand>
</feature>
<feature type="binding site" evidence="1">
    <location>
        <begin position="253"/>
        <end position="257"/>
    </location>
    <ligand>
        <name>GTP</name>
        <dbReference type="ChEBI" id="CHEBI:37565"/>
        <label>2</label>
    </ligand>
</feature>
<feature type="binding site" evidence="1">
    <location>
        <begin position="318"/>
        <end position="321"/>
    </location>
    <ligand>
        <name>GTP</name>
        <dbReference type="ChEBI" id="CHEBI:37565"/>
        <label>2</label>
    </ligand>
</feature>
<proteinExistence type="inferred from homology"/>
<reference key="1">
    <citation type="submission" date="2007-10" db="EMBL/GenBank/DDBJ databases">
        <title>Complete sequence of Shewanella pealeana ATCC 700345.</title>
        <authorList>
            <consortium name="US DOE Joint Genome Institute"/>
            <person name="Copeland A."/>
            <person name="Lucas S."/>
            <person name="Lapidus A."/>
            <person name="Barry K."/>
            <person name="Glavina del Rio T."/>
            <person name="Dalin E."/>
            <person name="Tice H."/>
            <person name="Pitluck S."/>
            <person name="Chertkov O."/>
            <person name="Brettin T."/>
            <person name="Bruce D."/>
            <person name="Detter J.C."/>
            <person name="Han C."/>
            <person name="Schmutz J."/>
            <person name="Larimer F."/>
            <person name="Land M."/>
            <person name="Hauser L."/>
            <person name="Kyrpides N."/>
            <person name="Kim E."/>
            <person name="Zhao J.-S.Z."/>
            <person name="Manno D."/>
            <person name="Hawari J."/>
            <person name="Richardson P."/>
        </authorList>
    </citation>
    <scope>NUCLEOTIDE SEQUENCE [LARGE SCALE GENOMIC DNA]</scope>
    <source>
        <strain>ATCC 700345 / ANG-SQ1</strain>
    </source>
</reference>
<protein>
    <recommendedName>
        <fullName evidence="1">GTPase Der</fullName>
    </recommendedName>
    <alternativeName>
        <fullName evidence="1">GTP-binding protein EngA</fullName>
    </alternativeName>
</protein>
<dbReference type="EMBL" id="CP000851">
    <property type="protein sequence ID" value="ABV86636.1"/>
    <property type="molecule type" value="Genomic_DNA"/>
</dbReference>
<dbReference type="RefSeq" id="WP_012154562.1">
    <property type="nucleotide sequence ID" value="NC_009901.1"/>
</dbReference>
<dbReference type="SMR" id="A8H249"/>
<dbReference type="STRING" id="398579.Spea_1309"/>
<dbReference type="KEGG" id="spl:Spea_1309"/>
<dbReference type="eggNOG" id="COG1160">
    <property type="taxonomic scope" value="Bacteria"/>
</dbReference>
<dbReference type="HOGENOM" id="CLU_016077_6_2_6"/>
<dbReference type="OrthoDB" id="9805918at2"/>
<dbReference type="Proteomes" id="UP000002608">
    <property type="component" value="Chromosome"/>
</dbReference>
<dbReference type="GO" id="GO:0005525">
    <property type="term" value="F:GTP binding"/>
    <property type="evidence" value="ECO:0007669"/>
    <property type="project" value="UniProtKB-UniRule"/>
</dbReference>
<dbReference type="GO" id="GO:0043022">
    <property type="term" value="F:ribosome binding"/>
    <property type="evidence" value="ECO:0007669"/>
    <property type="project" value="TreeGrafter"/>
</dbReference>
<dbReference type="GO" id="GO:0042254">
    <property type="term" value="P:ribosome biogenesis"/>
    <property type="evidence" value="ECO:0007669"/>
    <property type="project" value="UniProtKB-KW"/>
</dbReference>
<dbReference type="CDD" id="cd01894">
    <property type="entry name" value="EngA1"/>
    <property type="match status" value="1"/>
</dbReference>
<dbReference type="CDD" id="cd01895">
    <property type="entry name" value="EngA2"/>
    <property type="match status" value="1"/>
</dbReference>
<dbReference type="FunFam" id="3.30.300.20:FF:000004">
    <property type="entry name" value="GTPase Der"/>
    <property type="match status" value="1"/>
</dbReference>
<dbReference type="FunFam" id="3.40.50.300:FF:000040">
    <property type="entry name" value="GTPase Der"/>
    <property type="match status" value="1"/>
</dbReference>
<dbReference type="FunFam" id="3.40.50.300:FF:000057">
    <property type="entry name" value="GTPase Der"/>
    <property type="match status" value="1"/>
</dbReference>
<dbReference type="Gene3D" id="3.30.300.20">
    <property type="match status" value="1"/>
</dbReference>
<dbReference type="Gene3D" id="3.40.50.300">
    <property type="entry name" value="P-loop containing nucleotide triphosphate hydrolases"/>
    <property type="match status" value="2"/>
</dbReference>
<dbReference type="HAMAP" id="MF_00195">
    <property type="entry name" value="GTPase_Der"/>
    <property type="match status" value="1"/>
</dbReference>
<dbReference type="InterPro" id="IPR031166">
    <property type="entry name" value="G_ENGA"/>
</dbReference>
<dbReference type="InterPro" id="IPR006073">
    <property type="entry name" value="GTP-bd"/>
</dbReference>
<dbReference type="InterPro" id="IPR016484">
    <property type="entry name" value="GTPase_Der"/>
</dbReference>
<dbReference type="InterPro" id="IPR032859">
    <property type="entry name" value="KH_dom-like"/>
</dbReference>
<dbReference type="InterPro" id="IPR015946">
    <property type="entry name" value="KH_dom-like_a/b"/>
</dbReference>
<dbReference type="InterPro" id="IPR027417">
    <property type="entry name" value="P-loop_NTPase"/>
</dbReference>
<dbReference type="InterPro" id="IPR005225">
    <property type="entry name" value="Small_GTP-bd"/>
</dbReference>
<dbReference type="NCBIfam" id="TIGR03594">
    <property type="entry name" value="GTPase_EngA"/>
    <property type="match status" value="1"/>
</dbReference>
<dbReference type="NCBIfam" id="TIGR00231">
    <property type="entry name" value="small_GTP"/>
    <property type="match status" value="2"/>
</dbReference>
<dbReference type="PANTHER" id="PTHR43834">
    <property type="entry name" value="GTPASE DER"/>
    <property type="match status" value="1"/>
</dbReference>
<dbReference type="PANTHER" id="PTHR43834:SF6">
    <property type="entry name" value="GTPASE DER"/>
    <property type="match status" value="1"/>
</dbReference>
<dbReference type="Pfam" id="PF14714">
    <property type="entry name" value="KH_dom-like"/>
    <property type="match status" value="1"/>
</dbReference>
<dbReference type="Pfam" id="PF01926">
    <property type="entry name" value="MMR_HSR1"/>
    <property type="match status" value="2"/>
</dbReference>
<dbReference type="PIRSF" id="PIRSF006485">
    <property type="entry name" value="GTP-binding_EngA"/>
    <property type="match status" value="1"/>
</dbReference>
<dbReference type="PRINTS" id="PR00326">
    <property type="entry name" value="GTP1OBG"/>
</dbReference>
<dbReference type="SUPFAM" id="SSF52540">
    <property type="entry name" value="P-loop containing nucleoside triphosphate hydrolases"/>
    <property type="match status" value="2"/>
</dbReference>
<dbReference type="PROSITE" id="PS51712">
    <property type="entry name" value="G_ENGA"/>
    <property type="match status" value="2"/>
</dbReference>